<name>BR11_AMOMA</name>
<keyword id="KW-0878">Amphibian defense peptide</keyword>
<keyword id="KW-0044">Antibiotic</keyword>
<keyword id="KW-0929">Antimicrobial</keyword>
<keyword id="KW-0165">Cleavage on pair of basic residues</keyword>
<keyword id="KW-0204">Cytolysis</keyword>
<keyword id="KW-0903">Direct protein sequencing</keyword>
<keyword id="KW-1015">Disulfide bond</keyword>
<keyword id="KW-0295">Fungicide</keyword>
<keyword id="KW-0354">Hemolysis</keyword>
<keyword id="KW-0391">Immunity</keyword>
<keyword id="KW-0399">Innate immunity</keyword>
<keyword id="KW-0964">Secreted</keyword>
<keyword id="KW-0732">Signal</keyword>
<organism evidence="5">
    <name type="scientific">Amolops mantzorum</name>
    <name type="common">Sichuan torrent frog</name>
    <dbReference type="NCBI Taxonomy" id="167930"/>
    <lineage>
        <taxon>Eukaryota</taxon>
        <taxon>Metazoa</taxon>
        <taxon>Chordata</taxon>
        <taxon>Craniata</taxon>
        <taxon>Vertebrata</taxon>
        <taxon>Euteleostomi</taxon>
        <taxon>Amphibia</taxon>
        <taxon>Batrachia</taxon>
        <taxon>Anura</taxon>
        <taxon>Neobatrachia</taxon>
        <taxon>Ranoidea</taxon>
        <taxon>Ranidae</taxon>
        <taxon>Amolops</taxon>
    </lineage>
</organism>
<proteinExistence type="evidence at protein level"/>
<dbReference type="EMBL" id="HQ128615">
    <property type="protein sequence ID" value="ADM34273.1"/>
    <property type="molecule type" value="mRNA"/>
</dbReference>
<dbReference type="GO" id="GO:0005576">
    <property type="term" value="C:extracellular region"/>
    <property type="evidence" value="ECO:0007669"/>
    <property type="project" value="UniProtKB-SubCell"/>
</dbReference>
<dbReference type="GO" id="GO:0042742">
    <property type="term" value="P:defense response to bacterium"/>
    <property type="evidence" value="ECO:0007669"/>
    <property type="project" value="UniProtKB-KW"/>
</dbReference>
<dbReference type="GO" id="GO:0050832">
    <property type="term" value="P:defense response to fungus"/>
    <property type="evidence" value="ECO:0007669"/>
    <property type="project" value="UniProtKB-KW"/>
</dbReference>
<dbReference type="GO" id="GO:0045087">
    <property type="term" value="P:innate immune response"/>
    <property type="evidence" value="ECO:0007669"/>
    <property type="project" value="UniProtKB-KW"/>
</dbReference>
<dbReference type="GO" id="GO:0031640">
    <property type="term" value="P:killing of cells of another organism"/>
    <property type="evidence" value="ECO:0007669"/>
    <property type="project" value="UniProtKB-KW"/>
</dbReference>
<dbReference type="InterPro" id="IPR012520">
    <property type="entry name" value="Antimicrobial_frog_1"/>
</dbReference>
<dbReference type="InterPro" id="IPR004275">
    <property type="entry name" value="Frog_antimicrobial_propeptide"/>
</dbReference>
<dbReference type="Pfam" id="PF08018">
    <property type="entry name" value="Antimicrobial_1"/>
    <property type="match status" value="1"/>
</dbReference>
<dbReference type="Pfam" id="PF03032">
    <property type="entry name" value="FSAP_sig_propep"/>
    <property type="match status" value="1"/>
</dbReference>
<protein>
    <recommendedName>
        <fullName evidence="3">Brevinin-1MT1</fullName>
    </recommendedName>
</protein>
<reference evidence="5" key="1">
    <citation type="journal article" date="2014" name="Zool. Sci.">
        <title>Peptidomic analysis of antimicrobial peptides in skin secretions of Amolops mantzorum.</title>
        <authorList>
            <person name="Hu Y."/>
            <person name="Yu Z."/>
            <person name="Xu S."/>
            <person name="Hu Y."/>
            <person name="Guo C."/>
            <person name="Li F."/>
            <person name="Li J."/>
            <person name="Liu J."/>
            <person name="Wang H."/>
        </authorList>
    </citation>
    <scope>NUCLEOTIDE SEQUENCE [MRNA]</scope>
    <scope>PROTEIN SEQUENCE OF 47-70</scope>
    <scope>SYNTHESIS OF 47-70</scope>
    <scope>FUNCTION</scope>
    <scope>SUBCELLULAR LOCATION</scope>
    <scope>DISULFIDE BOND</scope>
    <scope>IDENTIFICATION BY MASS SPECTROMETRY</scope>
    <source>
        <tissue evidence="3">Skin</tissue>
        <tissue evidence="3">Skin secretion</tissue>
    </source>
</reference>
<sequence length="70" mass="8170">MFTLKKSLLLLFFLGTINLSLCEQERDADEEERRDDDEMDVEVEKRFLPLVASLAANFLPKLFCKITKKC</sequence>
<accession>E1B240</accession>
<evidence type="ECO:0000255" key="1"/>
<evidence type="ECO:0000269" key="2">
    <source>
    </source>
</evidence>
<evidence type="ECO:0000303" key="3">
    <source>
    </source>
</evidence>
<evidence type="ECO:0000305" key="4">
    <source>
    </source>
</evidence>
<evidence type="ECO:0000312" key="5">
    <source>
        <dbReference type="EMBL" id="ADM34273.1"/>
    </source>
</evidence>
<comment type="function">
    <text evidence="2">Antimicrobial peptide with activity against a variety of Gram-negative and Gram-positive bacteria and against fungi (PubMed:24601776). Shows strong hemolytic activity against human erythrocytes (PubMed:24601776).</text>
</comment>
<comment type="subcellular location">
    <subcellularLocation>
        <location evidence="2">Secreted</location>
    </subcellularLocation>
</comment>
<comment type="tissue specificity">
    <text evidence="4">Expressed by the skin glands.</text>
</comment>
<comment type="similarity">
    <text evidence="1">Belongs to the frog skin active peptide (FSAP) family. Brevinin subfamily.</text>
</comment>
<feature type="signal peptide" evidence="1">
    <location>
        <begin position="1"/>
        <end position="22"/>
    </location>
</feature>
<feature type="propeptide" id="PRO_0000440074" evidence="4">
    <location>
        <begin position="23"/>
        <end position="44"/>
    </location>
</feature>
<feature type="peptide" id="PRO_0000440075" description="Brevinin-1MT1" evidence="2">
    <location>
        <begin position="47"/>
        <end position="70"/>
    </location>
</feature>
<feature type="disulfide bond" evidence="2">
    <location>
        <begin position="64"/>
        <end position="70"/>
    </location>
</feature>